<protein>
    <recommendedName>
        <fullName evidence="1">tRNA(Ile)-lysidine synthase</fullName>
        <ecNumber evidence="1">6.3.4.19</ecNumber>
    </recommendedName>
    <alternativeName>
        <fullName evidence="1">tRNA(Ile)-2-lysyl-cytidine synthase</fullName>
    </alternativeName>
    <alternativeName>
        <fullName evidence="1">tRNA(Ile)-lysidine synthetase</fullName>
    </alternativeName>
</protein>
<proteinExistence type="inferred from homology"/>
<reference key="1">
    <citation type="journal article" date="2003" name="Genome Res.">
        <title>Comparative genome analysis of Vibrio vulnificus, a marine pathogen.</title>
        <authorList>
            <person name="Chen C.-Y."/>
            <person name="Wu K.-M."/>
            <person name="Chang Y.-C."/>
            <person name="Chang C.-H."/>
            <person name="Tsai H.-C."/>
            <person name="Liao T.-L."/>
            <person name="Liu Y.-M."/>
            <person name="Chen H.-J."/>
            <person name="Shen A.B.-T."/>
            <person name="Li J.-C."/>
            <person name="Su T.-L."/>
            <person name="Shao C.-P."/>
            <person name="Lee C.-T."/>
            <person name="Hor L.-I."/>
            <person name="Tsai S.-F."/>
        </authorList>
    </citation>
    <scope>NUCLEOTIDE SEQUENCE [LARGE SCALE GENOMIC DNA]</scope>
    <source>
        <strain>YJ016</strain>
    </source>
</reference>
<gene>
    <name evidence="1" type="primary">tilS</name>
    <name type="ordered locus">VV2539</name>
</gene>
<sequence>MDALYSHFSQVLEQQRKANTRLVVAFSGGVDSRVLLELAHRYAQEHLLPCCAVHVHHGLSHNADQWVQSCAAWCQEKNIPLTVERVQLDLTQGNSIEEEARNARYQALRAHINADDLLLTGQHADDQVETFLLALKRGSGPKGLSSMAQQMPFSQGRLIRPLLDVRRQEIERCAHAIGLNWVEDESNQDTRYDRNFLRQQILPALSERWPSFAASVQRSATLCAEQEALLDELLLPVFEQLFGEDQSLAITLLSQQSELARFKLFRMWLAKLGHPMPTRHQLSLIWQQVALSQADANPILQLSQGQVRRFNQRLYLVADNQDLSAWHAPITLNTPLALPDGLGTIELTLSRGFGQIALPEQSEALWISFNPEGLSAHPAERGHSRKLKKLFQEYQVPSWLRRRTPILMYHQQVVAVAGLFVDRQFIGQDCELFWRK</sequence>
<name>TILS_VIBVY</name>
<accession>Q7MIH8</accession>
<evidence type="ECO:0000255" key="1">
    <source>
        <dbReference type="HAMAP-Rule" id="MF_01161"/>
    </source>
</evidence>
<dbReference type="EC" id="6.3.4.19" evidence="1"/>
<dbReference type="EMBL" id="BA000037">
    <property type="protein sequence ID" value="BAC95302.1"/>
    <property type="molecule type" value="Genomic_DNA"/>
</dbReference>
<dbReference type="RefSeq" id="WP_011150954.1">
    <property type="nucleotide sequence ID" value="NC_005139.1"/>
</dbReference>
<dbReference type="SMR" id="Q7MIH8"/>
<dbReference type="STRING" id="672.VV93_v1c22590"/>
<dbReference type="KEGG" id="vvy:VV2539"/>
<dbReference type="PATRIC" id="fig|196600.6.peg.2544"/>
<dbReference type="eggNOG" id="COG0037">
    <property type="taxonomic scope" value="Bacteria"/>
</dbReference>
<dbReference type="HOGENOM" id="CLU_018869_2_0_6"/>
<dbReference type="Proteomes" id="UP000002675">
    <property type="component" value="Chromosome I"/>
</dbReference>
<dbReference type="GO" id="GO:0005737">
    <property type="term" value="C:cytoplasm"/>
    <property type="evidence" value="ECO:0007669"/>
    <property type="project" value="UniProtKB-SubCell"/>
</dbReference>
<dbReference type="GO" id="GO:0005524">
    <property type="term" value="F:ATP binding"/>
    <property type="evidence" value="ECO:0007669"/>
    <property type="project" value="UniProtKB-UniRule"/>
</dbReference>
<dbReference type="GO" id="GO:0032267">
    <property type="term" value="F:tRNA(Ile)-lysidine synthase activity"/>
    <property type="evidence" value="ECO:0007669"/>
    <property type="project" value="UniProtKB-EC"/>
</dbReference>
<dbReference type="GO" id="GO:0006400">
    <property type="term" value="P:tRNA modification"/>
    <property type="evidence" value="ECO:0007669"/>
    <property type="project" value="UniProtKB-UniRule"/>
</dbReference>
<dbReference type="CDD" id="cd01992">
    <property type="entry name" value="TilS_N"/>
    <property type="match status" value="1"/>
</dbReference>
<dbReference type="Gene3D" id="1.20.59.20">
    <property type="match status" value="1"/>
</dbReference>
<dbReference type="Gene3D" id="3.40.50.620">
    <property type="entry name" value="HUPs"/>
    <property type="match status" value="1"/>
</dbReference>
<dbReference type="HAMAP" id="MF_01161">
    <property type="entry name" value="tRNA_Ile_lys_synt"/>
    <property type="match status" value="1"/>
</dbReference>
<dbReference type="InterPro" id="IPR012796">
    <property type="entry name" value="Lysidine-tRNA-synth_C"/>
</dbReference>
<dbReference type="InterPro" id="IPR014729">
    <property type="entry name" value="Rossmann-like_a/b/a_fold"/>
</dbReference>
<dbReference type="InterPro" id="IPR011063">
    <property type="entry name" value="TilS/TtcA_N"/>
</dbReference>
<dbReference type="InterPro" id="IPR012094">
    <property type="entry name" value="tRNA_Ile_lys_synt"/>
</dbReference>
<dbReference type="InterPro" id="IPR012795">
    <property type="entry name" value="tRNA_Ile_lys_synt_N"/>
</dbReference>
<dbReference type="InterPro" id="IPR015262">
    <property type="entry name" value="tRNA_Ile_lys_synt_subst-bd"/>
</dbReference>
<dbReference type="NCBIfam" id="TIGR02433">
    <property type="entry name" value="lysidine_TilS_C"/>
    <property type="match status" value="1"/>
</dbReference>
<dbReference type="NCBIfam" id="TIGR02432">
    <property type="entry name" value="lysidine_TilS_N"/>
    <property type="match status" value="1"/>
</dbReference>
<dbReference type="PANTHER" id="PTHR43033">
    <property type="entry name" value="TRNA(ILE)-LYSIDINE SYNTHASE-RELATED"/>
    <property type="match status" value="1"/>
</dbReference>
<dbReference type="PANTHER" id="PTHR43033:SF1">
    <property type="entry name" value="TRNA(ILE)-LYSIDINE SYNTHASE-RELATED"/>
    <property type="match status" value="1"/>
</dbReference>
<dbReference type="Pfam" id="PF01171">
    <property type="entry name" value="ATP_bind_3"/>
    <property type="match status" value="1"/>
</dbReference>
<dbReference type="Pfam" id="PF09179">
    <property type="entry name" value="TilS"/>
    <property type="match status" value="1"/>
</dbReference>
<dbReference type="Pfam" id="PF11734">
    <property type="entry name" value="TilS_C"/>
    <property type="match status" value="1"/>
</dbReference>
<dbReference type="SMART" id="SM00977">
    <property type="entry name" value="TilS_C"/>
    <property type="match status" value="1"/>
</dbReference>
<dbReference type="SUPFAM" id="SSF52402">
    <property type="entry name" value="Adenine nucleotide alpha hydrolases-like"/>
    <property type="match status" value="1"/>
</dbReference>
<dbReference type="SUPFAM" id="SSF82829">
    <property type="entry name" value="MesJ substrate recognition domain-like"/>
    <property type="match status" value="1"/>
</dbReference>
<dbReference type="SUPFAM" id="SSF56037">
    <property type="entry name" value="PheT/TilS domain"/>
    <property type="match status" value="1"/>
</dbReference>
<comment type="function">
    <text evidence="1">Ligates lysine onto the cytidine present at position 34 of the AUA codon-specific tRNA(Ile) that contains the anticodon CAU, in an ATP-dependent manner. Cytidine is converted to lysidine, thus changing the amino acid specificity of the tRNA from methionine to isoleucine.</text>
</comment>
<comment type="catalytic activity">
    <reaction evidence="1">
        <text>cytidine(34) in tRNA(Ile2) + L-lysine + ATP = lysidine(34) in tRNA(Ile2) + AMP + diphosphate + H(+)</text>
        <dbReference type="Rhea" id="RHEA:43744"/>
        <dbReference type="Rhea" id="RHEA-COMP:10625"/>
        <dbReference type="Rhea" id="RHEA-COMP:10670"/>
        <dbReference type="ChEBI" id="CHEBI:15378"/>
        <dbReference type="ChEBI" id="CHEBI:30616"/>
        <dbReference type="ChEBI" id="CHEBI:32551"/>
        <dbReference type="ChEBI" id="CHEBI:33019"/>
        <dbReference type="ChEBI" id="CHEBI:82748"/>
        <dbReference type="ChEBI" id="CHEBI:83665"/>
        <dbReference type="ChEBI" id="CHEBI:456215"/>
        <dbReference type="EC" id="6.3.4.19"/>
    </reaction>
</comment>
<comment type="subcellular location">
    <subcellularLocation>
        <location evidence="1">Cytoplasm</location>
    </subcellularLocation>
</comment>
<comment type="domain">
    <text>The N-terminal region contains the highly conserved SGGXDS motif, predicted to be a P-loop motif involved in ATP binding.</text>
</comment>
<comment type="similarity">
    <text evidence="1">Belongs to the tRNA(Ile)-lysidine synthase family.</text>
</comment>
<keyword id="KW-0067">ATP-binding</keyword>
<keyword id="KW-0963">Cytoplasm</keyword>
<keyword id="KW-0436">Ligase</keyword>
<keyword id="KW-0547">Nucleotide-binding</keyword>
<keyword id="KW-0819">tRNA processing</keyword>
<feature type="chain" id="PRO_0000181803" description="tRNA(Ile)-lysidine synthase">
    <location>
        <begin position="1"/>
        <end position="436"/>
    </location>
</feature>
<feature type="binding site" evidence="1">
    <location>
        <begin position="27"/>
        <end position="32"/>
    </location>
    <ligand>
        <name>ATP</name>
        <dbReference type="ChEBI" id="CHEBI:30616"/>
    </ligand>
</feature>
<organism>
    <name type="scientific">Vibrio vulnificus (strain YJ016)</name>
    <dbReference type="NCBI Taxonomy" id="196600"/>
    <lineage>
        <taxon>Bacteria</taxon>
        <taxon>Pseudomonadati</taxon>
        <taxon>Pseudomonadota</taxon>
        <taxon>Gammaproteobacteria</taxon>
        <taxon>Vibrionales</taxon>
        <taxon>Vibrionaceae</taxon>
        <taxon>Vibrio</taxon>
    </lineage>
</organism>